<name>HELY_MYCTU</name>
<protein>
    <recommendedName>
        <fullName>Probable helicase HelY</fullName>
        <ecNumber>3.6.4.-</ecNumber>
    </recommendedName>
</protein>
<keyword id="KW-0067">ATP-binding</keyword>
<keyword id="KW-0347">Helicase</keyword>
<keyword id="KW-0378">Hydrolase</keyword>
<keyword id="KW-0547">Nucleotide-binding</keyword>
<keyword id="KW-1185">Reference proteome</keyword>
<dbReference type="EC" id="3.6.4.-"/>
<dbReference type="EMBL" id="AL123456">
    <property type="protein sequence ID" value="CCP44867.1"/>
    <property type="molecule type" value="Genomic_DNA"/>
</dbReference>
<dbReference type="PIR" id="G70767">
    <property type="entry name" value="G70767"/>
</dbReference>
<dbReference type="RefSeq" id="NP_216608.1">
    <property type="nucleotide sequence ID" value="NC_000962.3"/>
</dbReference>
<dbReference type="RefSeq" id="WP_003899167.1">
    <property type="nucleotide sequence ID" value="NZ_NVQJ01000061.1"/>
</dbReference>
<dbReference type="SMR" id="P9WMR1"/>
<dbReference type="FunCoup" id="P9WMR1">
    <property type="interactions" value="267"/>
</dbReference>
<dbReference type="STRING" id="83332.Rv2092c"/>
<dbReference type="PaxDb" id="83332-Rv2092c"/>
<dbReference type="GeneID" id="887736"/>
<dbReference type="KEGG" id="mtu:Rv2092c"/>
<dbReference type="KEGG" id="mtv:RVBD_2092c"/>
<dbReference type="TubercuList" id="Rv2092c"/>
<dbReference type="eggNOG" id="COG4581">
    <property type="taxonomic scope" value="Bacteria"/>
</dbReference>
<dbReference type="InParanoid" id="P9WMR1"/>
<dbReference type="OrthoDB" id="3229913at2"/>
<dbReference type="PhylomeDB" id="P9WMR1"/>
<dbReference type="Proteomes" id="UP000001584">
    <property type="component" value="Chromosome"/>
</dbReference>
<dbReference type="GO" id="GO:0005829">
    <property type="term" value="C:cytosol"/>
    <property type="evidence" value="ECO:0007005"/>
    <property type="project" value="MTBBASE"/>
</dbReference>
<dbReference type="GO" id="GO:0009274">
    <property type="term" value="C:peptidoglycan-based cell wall"/>
    <property type="evidence" value="ECO:0007005"/>
    <property type="project" value="MTBBASE"/>
</dbReference>
<dbReference type="GO" id="GO:0005886">
    <property type="term" value="C:plasma membrane"/>
    <property type="evidence" value="ECO:0007005"/>
    <property type="project" value="MTBBASE"/>
</dbReference>
<dbReference type="GO" id="GO:0055087">
    <property type="term" value="C:Ski complex"/>
    <property type="evidence" value="ECO:0000318"/>
    <property type="project" value="GO_Central"/>
</dbReference>
<dbReference type="GO" id="GO:0005524">
    <property type="term" value="F:ATP binding"/>
    <property type="evidence" value="ECO:0007669"/>
    <property type="project" value="UniProtKB-KW"/>
</dbReference>
<dbReference type="GO" id="GO:0016787">
    <property type="term" value="F:hydrolase activity"/>
    <property type="evidence" value="ECO:0007669"/>
    <property type="project" value="UniProtKB-KW"/>
</dbReference>
<dbReference type="GO" id="GO:0003676">
    <property type="term" value="F:nucleic acid binding"/>
    <property type="evidence" value="ECO:0007669"/>
    <property type="project" value="InterPro"/>
</dbReference>
<dbReference type="GO" id="GO:0003724">
    <property type="term" value="F:RNA helicase activity"/>
    <property type="evidence" value="ECO:0000318"/>
    <property type="project" value="GO_Central"/>
</dbReference>
<dbReference type="GO" id="GO:0070478">
    <property type="term" value="P:nuclear-transcribed mRNA catabolic process, 3'-5' exonucleolytic nonsense-mediated decay"/>
    <property type="evidence" value="ECO:0000318"/>
    <property type="project" value="GO_Central"/>
</dbReference>
<dbReference type="CDD" id="cd18795">
    <property type="entry name" value="SF2_C_Ski2"/>
    <property type="match status" value="1"/>
</dbReference>
<dbReference type="FunFam" id="1.10.3380.30:FF:000012">
    <property type="entry name" value="Probable helicase HelY"/>
    <property type="match status" value="1"/>
</dbReference>
<dbReference type="Gene3D" id="1.10.3380.30">
    <property type="match status" value="1"/>
</dbReference>
<dbReference type="Gene3D" id="3.40.50.300">
    <property type="entry name" value="P-loop containing nucleotide triphosphate hydrolases"/>
    <property type="match status" value="2"/>
</dbReference>
<dbReference type="InterPro" id="IPR011545">
    <property type="entry name" value="DEAD/DEAH_box_helicase_dom"/>
</dbReference>
<dbReference type="InterPro" id="IPR014001">
    <property type="entry name" value="Helicase_ATP-bd"/>
</dbReference>
<dbReference type="InterPro" id="IPR001650">
    <property type="entry name" value="Helicase_C-like"/>
</dbReference>
<dbReference type="InterPro" id="IPR027417">
    <property type="entry name" value="P-loop_NTPase"/>
</dbReference>
<dbReference type="InterPro" id="IPR050699">
    <property type="entry name" value="RNA-DNA_Helicase"/>
</dbReference>
<dbReference type="InterPro" id="IPR012961">
    <property type="entry name" value="Ski2/MTR4_C"/>
</dbReference>
<dbReference type="PANTHER" id="PTHR12131">
    <property type="entry name" value="ATP-DEPENDENT RNA AND DNA HELICASE"/>
    <property type="match status" value="1"/>
</dbReference>
<dbReference type="PANTHER" id="PTHR12131:SF1">
    <property type="entry name" value="ATP-DEPENDENT RNA HELICASE SUPV3L1, MITOCHONDRIAL-RELATED"/>
    <property type="match status" value="1"/>
</dbReference>
<dbReference type="Pfam" id="PF00270">
    <property type="entry name" value="DEAD"/>
    <property type="match status" value="1"/>
</dbReference>
<dbReference type="Pfam" id="PF08148">
    <property type="entry name" value="DSHCT"/>
    <property type="match status" value="1"/>
</dbReference>
<dbReference type="Pfam" id="PF00271">
    <property type="entry name" value="Helicase_C"/>
    <property type="match status" value="1"/>
</dbReference>
<dbReference type="SMART" id="SM00487">
    <property type="entry name" value="DEXDc"/>
    <property type="match status" value="1"/>
</dbReference>
<dbReference type="SMART" id="SM01142">
    <property type="entry name" value="DSHCT"/>
    <property type="match status" value="1"/>
</dbReference>
<dbReference type="SMART" id="SM00490">
    <property type="entry name" value="HELICc"/>
    <property type="match status" value="1"/>
</dbReference>
<dbReference type="SUPFAM" id="SSF52540">
    <property type="entry name" value="P-loop containing nucleoside triphosphate hydrolases"/>
    <property type="match status" value="1"/>
</dbReference>
<dbReference type="PROSITE" id="PS51192">
    <property type="entry name" value="HELICASE_ATP_BIND_1"/>
    <property type="match status" value="1"/>
</dbReference>
<dbReference type="PROSITE" id="PS51194">
    <property type="entry name" value="HELICASE_CTER"/>
    <property type="match status" value="1"/>
</dbReference>
<gene>
    <name type="primary">helY</name>
    <name type="ordered locus">Rv2092c</name>
    <name type="ORF">MTCY49.32c</name>
</gene>
<proteinExistence type="evidence at protein level"/>
<organism>
    <name type="scientific">Mycobacterium tuberculosis (strain ATCC 25618 / H37Rv)</name>
    <dbReference type="NCBI Taxonomy" id="83332"/>
    <lineage>
        <taxon>Bacteria</taxon>
        <taxon>Bacillati</taxon>
        <taxon>Actinomycetota</taxon>
        <taxon>Actinomycetes</taxon>
        <taxon>Mycobacteriales</taxon>
        <taxon>Mycobacteriaceae</taxon>
        <taxon>Mycobacterium</taxon>
        <taxon>Mycobacterium tuberculosis complex</taxon>
    </lineage>
</organism>
<reference key="1">
    <citation type="journal article" date="1998" name="Nature">
        <title>Deciphering the biology of Mycobacterium tuberculosis from the complete genome sequence.</title>
        <authorList>
            <person name="Cole S.T."/>
            <person name="Brosch R."/>
            <person name="Parkhill J."/>
            <person name="Garnier T."/>
            <person name="Churcher C.M."/>
            <person name="Harris D.E."/>
            <person name="Gordon S.V."/>
            <person name="Eiglmeier K."/>
            <person name="Gas S."/>
            <person name="Barry C.E. III"/>
            <person name="Tekaia F."/>
            <person name="Badcock K."/>
            <person name="Basham D."/>
            <person name="Brown D."/>
            <person name="Chillingworth T."/>
            <person name="Connor R."/>
            <person name="Davies R.M."/>
            <person name="Devlin K."/>
            <person name="Feltwell T."/>
            <person name="Gentles S."/>
            <person name="Hamlin N."/>
            <person name="Holroyd S."/>
            <person name="Hornsby T."/>
            <person name="Jagels K."/>
            <person name="Krogh A."/>
            <person name="McLean J."/>
            <person name="Moule S."/>
            <person name="Murphy L.D."/>
            <person name="Oliver S."/>
            <person name="Osborne J."/>
            <person name="Quail M.A."/>
            <person name="Rajandream M.A."/>
            <person name="Rogers J."/>
            <person name="Rutter S."/>
            <person name="Seeger K."/>
            <person name="Skelton S."/>
            <person name="Squares S."/>
            <person name="Squares R."/>
            <person name="Sulston J.E."/>
            <person name="Taylor K."/>
            <person name="Whitehead S."/>
            <person name="Barrell B.G."/>
        </authorList>
    </citation>
    <scope>NUCLEOTIDE SEQUENCE [LARGE SCALE GENOMIC DNA]</scope>
    <source>
        <strain>ATCC 25618 / H37Rv</strain>
    </source>
</reference>
<reference key="2">
    <citation type="journal article" date="2011" name="Mol. Cell. Proteomics">
        <title>Proteogenomic analysis of Mycobacterium tuberculosis by high resolution mass spectrometry.</title>
        <authorList>
            <person name="Kelkar D.S."/>
            <person name="Kumar D."/>
            <person name="Kumar P."/>
            <person name="Balakrishnan L."/>
            <person name="Muthusamy B."/>
            <person name="Yadav A.K."/>
            <person name="Shrivastava P."/>
            <person name="Marimuthu A."/>
            <person name="Anand S."/>
            <person name="Sundaram H."/>
            <person name="Kingsbury R."/>
            <person name="Harsha H.C."/>
            <person name="Nair B."/>
            <person name="Prasad T.S."/>
            <person name="Chauhan D.S."/>
            <person name="Katoch K."/>
            <person name="Katoch V.M."/>
            <person name="Kumar P."/>
            <person name="Chaerkady R."/>
            <person name="Ramachandran S."/>
            <person name="Dash D."/>
            <person name="Pandey A."/>
        </authorList>
    </citation>
    <scope>IDENTIFICATION BY MASS SPECTROMETRY [LARGE SCALE ANALYSIS]</scope>
    <source>
        <strain>ATCC 25618 / H37Rv</strain>
    </source>
</reference>
<sequence>MTELAELDRFTAELPFSLDDFQQRACSALERGHGVLVCAPTGAGKTVVGEFAVHLALAAGSKCFYTTPLKALSNQKHTDLTARYGRDQIGLLTGDLSVNGNAPVVVMTTEVLRNMLYADSPALQGLSYVVMDEVHFLADRMRGPVWEEVILQLPDDVRVVSLSATVSNAEEFGGWIQTVRGDTTVVVDEHRPVPLWQHVLVGKRMFDLFDYRIGEAEGQPQVNRELLRHIAHRREADRMADWQPRRRGSGRPGFYRPPGRPEVIAKLDAEGLLPAITFVFSRAGCDAAVTQCLRSPLRLTSEEERARIAEVIDHRCGDLADSDLAVLGYYEWREGLLRGLAAHHAGMLPAFRHTVEELFTAGLVKAVFATETLALGINMPARTVVLERLVKFNGEQHMPLTPGEYTQLTGRAGRRGIDVEGHAVVIWHPEIEPSEVAGLASTRTFPLRSSFAPSYNMTINLVHRMGPQQAHRLLEQSFAQYQADRSVVGLVRGIERGNRILGEIAAELGGSDAPILEYARLRARVSELERAQARASRLQRRQAATDALAALRRGDIITITHGRRGGLAVVLESARDRDDPRPLVLTEHRWAGRISSADYSGTTPVGSMTLPKRVEHRQPRVRRDLASALRSAAAGLVIPAARRVSEAGGFHDPELESSREQLRRHPVHTSPGLEDQIRQAERYLRIERDNAQLERKVAAATNSLARTFDRFVGLLTEREFIDGPATDPVVTDDGRLLARIYSESDLLVAECLRTGAWEGLKPAELAGVVSAVVYETRGGDGQGAPFGADVPTPRLRQALTQTSRLSTTLRADEQAHRITPSREPDDGFVRVIYRWSRTGDLAAALAAADVNGSGSPLLAGDFVRWCRQVLDLLDQVRNAAPNPELRATAKRAIGDIRRGVVAVDAG</sequence>
<comment type="similarity">
    <text evidence="3">Belongs to the helicase family. SKI2 subfamily.</text>
</comment>
<feature type="chain" id="PRO_0000102102" description="Probable helicase HelY">
    <location>
        <begin position="1"/>
        <end position="906"/>
    </location>
</feature>
<feature type="domain" description="Helicase ATP-binding" evidence="1">
    <location>
        <begin position="26"/>
        <end position="184"/>
    </location>
</feature>
<feature type="domain" description="Helicase C-terminal" evidence="2">
    <location>
        <begin position="259"/>
        <end position="463"/>
    </location>
</feature>
<feature type="short sequence motif" description="DEVH box">
    <location>
        <begin position="132"/>
        <end position="135"/>
    </location>
</feature>
<feature type="binding site" evidence="1">
    <location>
        <begin position="39"/>
        <end position="46"/>
    </location>
    <ligand>
        <name>ATP</name>
        <dbReference type="ChEBI" id="CHEBI:30616"/>
    </ligand>
</feature>
<accession>P9WMR1</accession>
<accession>L0T8N1</accession>
<accession>Q10701</accession>
<evidence type="ECO:0000255" key="1">
    <source>
        <dbReference type="PROSITE-ProRule" id="PRU00541"/>
    </source>
</evidence>
<evidence type="ECO:0000255" key="2">
    <source>
        <dbReference type="PROSITE-ProRule" id="PRU00542"/>
    </source>
</evidence>
<evidence type="ECO:0000305" key="3"/>